<organismHost>
    <name type="scientific">Acanthamoeba polyphaga</name>
    <name type="common">Amoeba</name>
    <dbReference type="NCBI Taxonomy" id="5757"/>
</organismHost>
<evidence type="ECO:0000250" key="1"/>
<evidence type="ECO:0000255" key="2"/>
<evidence type="ECO:0000269" key="3">
    <source>
    </source>
</evidence>
<evidence type="ECO:0000305" key="4"/>
<accession>Q5UPV8</accession>
<name>MCAR_MIMIV</name>
<organism>
    <name type="scientific">Acanthamoeba polyphaga mimivirus</name>
    <name type="common">APMV</name>
    <dbReference type="NCBI Taxonomy" id="212035"/>
    <lineage>
        <taxon>Viruses</taxon>
        <taxon>Varidnaviria</taxon>
        <taxon>Bamfordvirae</taxon>
        <taxon>Nucleocytoviricota</taxon>
        <taxon>Megaviricetes</taxon>
        <taxon>Imitervirales</taxon>
        <taxon>Mimiviridae</taxon>
        <taxon>Megamimivirinae</taxon>
        <taxon>Mimivirus</taxon>
        <taxon>Mimivirus bradfordmassiliense</taxon>
    </lineage>
</organism>
<reference key="1">
    <citation type="journal article" date="2004" name="Science">
        <title>The 1.2-megabase genome sequence of Mimivirus.</title>
        <authorList>
            <person name="Raoult D."/>
            <person name="Audic S."/>
            <person name="Robert C."/>
            <person name="Abergel C."/>
            <person name="Renesto P."/>
            <person name="Ogata H."/>
            <person name="La Scola B."/>
            <person name="Susan M."/>
            <person name="Claverie J.-M."/>
        </authorList>
    </citation>
    <scope>NUCLEOTIDE SEQUENCE [LARGE SCALE GENOMIC DNA]</scope>
    <source>
        <strain>Rowbotham-Bradford</strain>
    </source>
</reference>
<reference key="2">
    <citation type="journal article" date="2007" name="J. Virol.">
        <title>The mimivirus genome encodes a mitochondrial carrier that transports dATP and dTTP.</title>
        <authorList>
            <person name="Monne M."/>
            <person name="Robinson A.J."/>
            <person name="Boes C."/>
            <person name="Harbour M.E."/>
            <person name="Fearnley I.M."/>
            <person name="Kunji E.R."/>
        </authorList>
    </citation>
    <scope>FUNCTION</scope>
</reference>
<protein>
    <recommendedName>
        <fullName>Mitochondrial carrier-like protein L276</fullName>
    </recommendedName>
    <alternativeName>
        <fullName>VMC1</fullName>
    </alternativeName>
    <alternativeName>
        <fullName>Viral mitochondrial carrier</fullName>
    </alternativeName>
</protein>
<dbReference type="EMBL" id="AY653733">
    <property type="protein sequence ID" value="AAV50548.1"/>
    <property type="molecule type" value="Genomic_DNA"/>
</dbReference>
<dbReference type="SMR" id="Q5UPV8"/>
<dbReference type="TCDB" id="2.A.29.26.1">
    <property type="family name" value="the mitochondrial carrier (mc) family"/>
</dbReference>
<dbReference type="KEGG" id="vg:9924890"/>
<dbReference type="OrthoDB" id="12111at10239"/>
<dbReference type="Proteomes" id="UP000001134">
    <property type="component" value="Genome"/>
</dbReference>
<dbReference type="GO" id="GO:0044192">
    <property type="term" value="C:host cell mitochondrial inner membrane"/>
    <property type="evidence" value="ECO:0007669"/>
    <property type="project" value="UniProtKB-SubCell"/>
</dbReference>
<dbReference type="GO" id="GO:0016020">
    <property type="term" value="C:membrane"/>
    <property type="evidence" value="ECO:0007669"/>
    <property type="project" value="UniProtKB-KW"/>
</dbReference>
<dbReference type="Gene3D" id="1.50.40.10">
    <property type="entry name" value="Mitochondrial carrier domain"/>
    <property type="match status" value="1"/>
</dbReference>
<dbReference type="InterPro" id="IPR018108">
    <property type="entry name" value="Mitochondrial_sb/sol_carrier"/>
</dbReference>
<dbReference type="InterPro" id="IPR023395">
    <property type="entry name" value="Mt_carrier_dom_sf"/>
</dbReference>
<dbReference type="PANTHER" id="PTHR45667">
    <property type="entry name" value="S-ADENOSYLMETHIONINE MITOCHONDRIAL CARRIER PROTEIN"/>
    <property type="match status" value="1"/>
</dbReference>
<dbReference type="Pfam" id="PF00153">
    <property type="entry name" value="Mito_carr"/>
    <property type="match status" value="2"/>
</dbReference>
<dbReference type="SUPFAM" id="SSF103506">
    <property type="entry name" value="Mitochondrial carrier"/>
    <property type="match status" value="1"/>
</dbReference>
<dbReference type="PROSITE" id="PS50920">
    <property type="entry name" value="SOLCAR"/>
    <property type="match status" value="3"/>
</dbReference>
<feature type="chain" id="PRO_0000243922" description="Mitochondrial carrier-like protein L276">
    <location>
        <begin position="1"/>
        <end position="237"/>
    </location>
</feature>
<feature type="transmembrane region" description="Helical; Name=1" evidence="2">
    <location>
        <begin position="11"/>
        <end position="27"/>
    </location>
</feature>
<feature type="transmembrane region" description="Helical; Name=2" evidence="2">
    <location>
        <begin position="60"/>
        <end position="76"/>
    </location>
</feature>
<feature type="transmembrane region" description="Helical; Name=3" evidence="2">
    <location>
        <begin position="91"/>
        <end position="108"/>
    </location>
</feature>
<feature type="transmembrane region" description="Helical; Name=4" evidence="2">
    <location>
        <begin position="140"/>
        <end position="160"/>
    </location>
</feature>
<feature type="transmembrane region" description="Helical; Name=5" evidence="2">
    <location>
        <begin position="166"/>
        <end position="183"/>
    </location>
</feature>
<feature type="transmembrane region" description="Helical; Name=6" evidence="2">
    <location>
        <begin position="205"/>
        <end position="226"/>
    </location>
</feature>
<feature type="repeat" description="Solcar 1">
    <location>
        <begin position="1"/>
        <end position="83"/>
    </location>
</feature>
<feature type="repeat" description="Solcar 2">
    <location>
        <begin position="85"/>
        <end position="161"/>
    </location>
</feature>
<feature type="repeat" description="Solcar 3">
    <location>
        <begin position="164"/>
        <end position="233"/>
    </location>
</feature>
<feature type="short sequence motif" description="Substrate recognition" evidence="1">
    <location>
        <begin position="191"/>
        <end position="196"/>
    </location>
</feature>
<sequence length="237" mass="27319">MAKYTDITNSAIATIVAEIITLPICTFKTNYQNNSTLSMQQCLKNIYMKNGISGFYKASVPAIMSQTYSTSSKYFLFRFFENKNYPYTNKMINGIISGIMTSLITHPIDNIKIHLQMNDSFMCKLRENGFGLFYRGYSKSFGKTVISSSMFFPLYETLNEYFEKPVVSSMLTAIISTTIMQPLDFLKTRHIYGLSLYNGLNLQHYYRGLSLNLMRIVPHFVITMTTIDFLNKKTLQY</sequence>
<comment type="function">
    <text evidence="3">Transports dATP and to a lesser extent dTTP, TTP, UTP and ADP, possibly across the mitochondrial inner membrane.</text>
</comment>
<comment type="subcellular location">
    <subcellularLocation>
        <location evidence="4">Host mitochondrion inner membrane</location>
        <topology evidence="4">Multi-pass membrane protein</topology>
    </subcellularLocation>
</comment>
<comment type="similarity">
    <text evidence="4">Belongs to the mitochondrial carrier (TC 2.A.29) family.</text>
</comment>
<keyword id="KW-1043">Host membrane</keyword>
<keyword id="KW-1045">Host mitochondrion</keyword>
<keyword id="KW-1046">Host mitochondrion inner membrane</keyword>
<keyword id="KW-0472">Membrane</keyword>
<keyword id="KW-1185">Reference proteome</keyword>
<keyword id="KW-0677">Repeat</keyword>
<keyword id="KW-0812">Transmembrane</keyword>
<keyword id="KW-1133">Transmembrane helix</keyword>
<keyword id="KW-0813">Transport</keyword>
<gene>
    <name type="ordered locus">MIMI_L276</name>
</gene>
<proteinExistence type="inferred from homology"/>